<protein>
    <recommendedName>
        <fullName evidence="1">tRNA1(Val) (adenine(37)-N6)-methyltransferase</fullName>
        <ecNumber evidence="1">2.1.1.223</ecNumber>
    </recommendedName>
    <alternativeName>
        <fullName evidence="1">tRNA m6A37 methyltransferase</fullName>
    </alternativeName>
</protein>
<keyword id="KW-0963">Cytoplasm</keyword>
<keyword id="KW-0489">Methyltransferase</keyword>
<keyword id="KW-0949">S-adenosyl-L-methionine</keyword>
<keyword id="KW-0808">Transferase</keyword>
<keyword id="KW-0819">tRNA processing</keyword>
<comment type="function">
    <text evidence="1">Specifically methylates the adenine in position 37 of tRNA(1)(Val) (anticodon cmo5UAC).</text>
</comment>
<comment type="catalytic activity">
    <reaction evidence="1">
        <text>adenosine(37) in tRNA1(Val) + S-adenosyl-L-methionine = N(6)-methyladenosine(37) in tRNA1(Val) + S-adenosyl-L-homocysteine + H(+)</text>
        <dbReference type="Rhea" id="RHEA:43160"/>
        <dbReference type="Rhea" id="RHEA-COMP:10369"/>
        <dbReference type="Rhea" id="RHEA-COMP:10370"/>
        <dbReference type="ChEBI" id="CHEBI:15378"/>
        <dbReference type="ChEBI" id="CHEBI:57856"/>
        <dbReference type="ChEBI" id="CHEBI:59789"/>
        <dbReference type="ChEBI" id="CHEBI:74411"/>
        <dbReference type="ChEBI" id="CHEBI:74449"/>
        <dbReference type="EC" id="2.1.1.223"/>
    </reaction>
</comment>
<comment type="subcellular location">
    <subcellularLocation>
        <location evidence="1">Cytoplasm</location>
    </subcellularLocation>
</comment>
<comment type="similarity">
    <text evidence="1">Belongs to the methyltransferase superfamily. tRNA (adenine-N(6)-)-methyltransferase family.</text>
</comment>
<accession>Q64TX7</accession>
<sequence length="237" mass="26573">MSQPFFQFKQFTVWHDKCAMKVGTDGVLLGAWTPVESSARILDIGTGTGLVALMLAQRCSASVIALEIDGKAAQQAAENITRSPWGSRIEVVCQDFRLYSNKNNSLKYDTIVSNPPYFTDSLKCPDSQRNTARHNDNLSYEELLKGVSNLLSPNGTFTVVIPMDASDSFKDIASSQGLYPSRQLLVITKPGAPPKRTLISFTFIKQDCKEEKLLTEVARHRYSDEYIKLTREFYLKM</sequence>
<name>TRMN6_BACFR</name>
<reference key="1">
    <citation type="journal article" date="2004" name="Proc. Natl. Acad. Sci. U.S.A.">
        <title>Genomic analysis of Bacteroides fragilis reveals extensive DNA inversions regulating cell surface adaptation.</title>
        <authorList>
            <person name="Kuwahara T."/>
            <person name="Yamashita A."/>
            <person name="Hirakawa H."/>
            <person name="Nakayama H."/>
            <person name="Toh H."/>
            <person name="Okada N."/>
            <person name="Kuhara S."/>
            <person name="Hattori M."/>
            <person name="Hayashi T."/>
            <person name="Ohnishi Y."/>
        </authorList>
    </citation>
    <scope>NUCLEOTIDE SEQUENCE [LARGE SCALE GENOMIC DNA]</scope>
    <source>
        <strain>YCH46</strain>
    </source>
</reference>
<organism>
    <name type="scientific">Bacteroides fragilis (strain YCH46)</name>
    <dbReference type="NCBI Taxonomy" id="295405"/>
    <lineage>
        <taxon>Bacteria</taxon>
        <taxon>Pseudomonadati</taxon>
        <taxon>Bacteroidota</taxon>
        <taxon>Bacteroidia</taxon>
        <taxon>Bacteroidales</taxon>
        <taxon>Bacteroidaceae</taxon>
        <taxon>Bacteroides</taxon>
    </lineage>
</organism>
<gene>
    <name type="ordered locus">BF2305</name>
</gene>
<dbReference type="EC" id="2.1.1.223" evidence="1"/>
<dbReference type="EMBL" id="AP006841">
    <property type="protein sequence ID" value="BAD49052.1"/>
    <property type="molecule type" value="Genomic_DNA"/>
</dbReference>
<dbReference type="RefSeq" id="WP_011202815.1">
    <property type="nucleotide sequence ID" value="NC_006347.1"/>
</dbReference>
<dbReference type="RefSeq" id="YP_099586.1">
    <property type="nucleotide sequence ID" value="NC_006347.1"/>
</dbReference>
<dbReference type="SMR" id="Q64TX7"/>
<dbReference type="STRING" id="295405.BF2305"/>
<dbReference type="KEGG" id="bfr:BF2305"/>
<dbReference type="PATRIC" id="fig|295405.11.peg.2234"/>
<dbReference type="HOGENOM" id="CLU_061983_0_0_10"/>
<dbReference type="OrthoDB" id="5383291at2"/>
<dbReference type="Proteomes" id="UP000002197">
    <property type="component" value="Chromosome"/>
</dbReference>
<dbReference type="GO" id="GO:0005737">
    <property type="term" value="C:cytoplasm"/>
    <property type="evidence" value="ECO:0007669"/>
    <property type="project" value="UniProtKB-SubCell"/>
</dbReference>
<dbReference type="GO" id="GO:0003676">
    <property type="term" value="F:nucleic acid binding"/>
    <property type="evidence" value="ECO:0007669"/>
    <property type="project" value="InterPro"/>
</dbReference>
<dbReference type="GO" id="GO:0016430">
    <property type="term" value="F:tRNA (adenine-N6)-methyltransferase activity"/>
    <property type="evidence" value="ECO:0007669"/>
    <property type="project" value="UniProtKB-UniRule"/>
</dbReference>
<dbReference type="GO" id="GO:0032259">
    <property type="term" value="P:methylation"/>
    <property type="evidence" value="ECO:0007669"/>
    <property type="project" value="UniProtKB-KW"/>
</dbReference>
<dbReference type="GO" id="GO:0008033">
    <property type="term" value="P:tRNA processing"/>
    <property type="evidence" value="ECO:0007669"/>
    <property type="project" value="UniProtKB-UniRule"/>
</dbReference>
<dbReference type="CDD" id="cd02440">
    <property type="entry name" value="AdoMet_MTases"/>
    <property type="match status" value="1"/>
</dbReference>
<dbReference type="Gene3D" id="3.40.50.150">
    <property type="entry name" value="Vaccinia Virus protein VP39"/>
    <property type="match status" value="1"/>
</dbReference>
<dbReference type="HAMAP" id="MF_01872">
    <property type="entry name" value="tRNA_methyltr_YfiC"/>
    <property type="match status" value="1"/>
</dbReference>
<dbReference type="InterPro" id="IPR002052">
    <property type="entry name" value="DNA_methylase_N6_adenine_CS"/>
</dbReference>
<dbReference type="InterPro" id="IPR029063">
    <property type="entry name" value="SAM-dependent_MTases_sf"/>
</dbReference>
<dbReference type="InterPro" id="IPR007848">
    <property type="entry name" value="Small_mtfrase_dom"/>
</dbReference>
<dbReference type="InterPro" id="IPR050210">
    <property type="entry name" value="tRNA_Adenine-N(6)_MTase"/>
</dbReference>
<dbReference type="InterPro" id="IPR022882">
    <property type="entry name" value="tRNA_adenine-N6_MeTrfase"/>
</dbReference>
<dbReference type="PANTHER" id="PTHR47739">
    <property type="entry name" value="TRNA1(VAL) (ADENINE(37)-N6)-METHYLTRANSFERASE"/>
    <property type="match status" value="1"/>
</dbReference>
<dbReference type="PANTHER" id="PTHR47739:SF1">
    <property type="entry name" value="TRNA1(VAL) (ADENINE(37)-N6)-METHYLTRANSFERASE"/>
    <property type="match status" value="1"/>
</dbReference>
<dbReference type="Pfam" id="PF05175">
    <property type="entry name" value="MTS"/>
    <property type="match status" value="1"/>
</dbReference>
<dbReference type="PRINTS" id="PR00507">
    <property type="entry name" value="N12N6MTFRASE"/>
</dbReference>
<dbReference type="SUPFAM" id="SSF53335">
    <property type="entry name" value="S-adenosyl-L-methionine-dependent methyltransferases"/>
    <property type="match status" value="1"/>
</dbReference>
<dbReference type="PROSITE" id="PS00092">
    <property type="entry name" value="N6_MTASE"/>
    <property type="match status" value="1"/>
</dbReference>
<feature type="chain" id="PRO_0000387341" description="tRNA1(Val) (adenine(37)-N6)-methyltransferase">
    <location>
        <begin position="1"/>
        <end position="237"/>
    </location>
</feature>
<evidence type="ECO:0000255" key="1">
    <source>
        <dbReference type="HAMAP-Rule" id="MF_01872"/>
    </source>
</evidence>
<proteinExistence type="inferred from homology"/>